<comment type="function">
    <text evidence="1">The UvrABC repair system catalyzes the recognition and processing of DNA lesions. UvrC both incises the 5' and 3' sides of the lesion. The N-terminal half is responsible for the 3' incision and the C-terminal half is responsible for the 5' incision.</text>
</comment>
<comment type="subunit">
    <text evidence="1">Interacts with UvrB in an incision complex.</text>
</comment>
<comment type="subcellular location">
    <subcellularLocation>
        <location evidence="1">Cytoplasm</location>
    </subcellularLocation>
</comment>
<comment type="similarity">
    <text evidence="1">Belongs to the UvrC family.</text>
</comment>
<reference key="1">
    <citation type="journal article" date="2005" name="PLoS Biol.">
        <title>Major structural differences and novel potential virulence mechanisms from the genomes of multiple Campylobacter species.</title>
        <authorList>
            <person name="Fouts D.E."/>
            <person name="Mongodin E.F."/>
            <person name="Mandrell R.E."/>
            <person name="Miller W.G."/>
            <person name="Rasko D.A."/>
            <person name="Ravel J."/>
            <person name="Brinkac L.M."/>
            <person name="DeBoy R.T."/>
            <person name="Parker C.T."/>
            <person name="Daugherty S.C."/>
            <person name="Dodson R.J."/>
            <person name="Durkin A.S."/>
            <person name="Madupu R."/>
            <person name="Sullivan S.A."/>
            <person name="Shetty J.U."/>
            <person name="Ayodeji M.A."/>
            <person name="Shvartsbeyn A."/>
            <person name="Schatz M.C."/>
            <person name="Badger J.H."/>
            <person name="Fraser C.M."/>
            <person name="Nelson K.E."/>
        </authorList>
    </citation>
    <scope>NUCLEOTIDE SEQUENCE [LARGE SCALE GENOMIC DNA]</scope>
    <source>
        <strain>RM1221</strain>
    </source>
</reference>
<dbReference type="EMBL" id="CP000025">
    <property type="protein sequence ID" value="AAW35702.1"/>
    <property type="molecule type" value="Genomic_DNA"/>
</dbReference>
<dbReference type="RefSeq" id="WP_002898461.1">
    <property type="nucleotide sequence ID" value="NC_003912.7"/>
</dbReference>
<dbReference type="SMR" id="Q5HTL6"/>
<dbReference type="KEGG" id="cjr:CJE1382"/>
<dbReference type="HOGENOM" id="CLU_014841_3_2_7"/>
<dbReference type="GO" id="GO:0005737">
    <property type="term" value="C:cytoplasm"/>
    <property type="evidence" value="ECO:0007669"/>
    <property type="project" value="UniProtKB-SubCell"/>
</dbReference>
<dbReference type="GO" id="GO:0009380">
    <property type="term" value="C:excinuclease repair complex"/>
    <property type="evidence" value="ECO:0007669"/>
    <property type="project" value="InterPro"/>
</dbReference>
<dbReference type="GO" id="GO:0003677">
    <property type="term" value="F:DNA binding"/>
    <property type="evidence" value="ECO:0007669"/>
    <property type="project" value="UniProtKB-UniRule"/>
</dbReference>
<dbReference type="GO" id="GO:0009381">
    <property type="term" value="F:excinuclease ABC activity"/>
    <property type="evidence" value="ECO:0007669"/>
    <property type="project" value="UniProtKB-UniRule"/>
</dbReference>
<dbReference type="GO" id="GO:0006289">
    <property type="term" value="P:nucleotide-excision repair"/>
    <property type="evidence" value="ECO:0007669"/>
    <property type="project" value="UniProtKB-UniRule"/>
</dbReference>
<dbReference type="GO" id="GO:0009432">
    <property type="term" value="P:SOS response"/>
    <property type="evidence" value="ECO:0007669"/>
    <property type="project" value="UniProtKB-UniRule"/>
</dbReference>
<dbReference type="CDD" id="cd10434">
    <property type="entry name" value="GIY-YIG_UvrC_Cho"/>
    <property type="match status" value="1"/>
</dbReference>
<dbReference type="FunFam" id="3.40.1440.10:FF:000001">
    <property type="entry name" value="UvrABC system protein C"/>
    <property type="match status" value="1"/>
</dbReference>
<dbReference type="Gene3D" id="3.40.1440.10">
    <property type="entry name" value="GIY-YIG endonuclease"/>
    <property type="match status" value="1"/>
</dbReference>
<dbReference type="Gene3D" id="4.10.860.10">
    <property type="entry name" value="UVR domain"/>
    <property type="match status" value="1"/>
</dbReference>
<dbReference type="Gene3D" id="3.30.420.340">
    <property type="entry name" value="UvrC, RNAse H endonuclease domain"/>
    <property type="match status" value="1"/>
</dbReference>
<dbReference type="HAMAP" id="MF_00203">
    <property type="entry name" value="UvrC"/>
    <property type="match status" value="1"/>
</dbReference>
<dbReference type="InterPro" id="IPR000305">
    <property type="entry name" value="GIY-YIG_endonuc"/>
</dbReference>
<dbReference type="InterPro" id="IPR035901">
    <property type="entry name" value="GIY-YIG_endonuc_sf"/>
</dbReference>
<dbReference type="InterPro" id="IPR047296">
    <property type="entry name" value="GIY-YIG_UvrC_Cho"/>
</dbReference>
<dbReference type="InterPro" id="IPR010994">
    <property type="entry name" value="RuvA_2-like"/>
</dbReference>
<dbReference type="InterPro" id="IPR001943">
    <property type="entry name" value="UVR_dom"/>
</dbReference>
<dbReference type="InterPro" id="IPR036876">
    <property type="entry name" value="UVR_dom_sf"/>
</dbReference>
<dbReference type="InterPro" id="IPR050066">
    <property type="entry name" value="UvrABC_protein_C"/>
</dbReference>
<dbReference type="InterPro" id="IPR004791">
    <property type="entry name" value="UvrC"/>
</dbReference>
<dbReference type="InterPro" id="IPR001162">
    <property type="entry name" value="UvrC_RNase_H_dom"/>
</dbReference>
<dbReference type="InterPro" id="IPR038476">
    <property type="entry name" value="UvrC_RNase_H_dom_sf"/>
</dbReference>
<dbReference type="NCBIfam" id="TIGR00194">
    <property type="entry name" value="uvrC"/>
    <property type="match status" value="1"/>
</dbReference>
<dbReference type="PANTHER" id="PTHR30562:SF1">
    <property type="entry name" value="UVRABC SYSTEM PROTEIN C"/>
    <property type="match status" value="1"/>
</dbReference>
<dbReference type="PANTHER" id="PTHR30562">
    <property type="entry name" value="UVRC/OXIDOREDUCTASE"/>
    <property type="match status" value="1"/>
</dbReference>
<dbReference type="Pfam" id="PF01541">
    <property type="entry name" value="GIY-YIG"/>
    <property type="match status" value="1"/>
</dbReference>
<dbReference type="Pfam" id="PF02151">
    <property type="entry name" value="UVR"/>
    <property type="match status" value="1"/>
</dbReference>
<dbReference type="Pfam" id="PF22920">
    <property type="entry name" value="UvrC_RNaseH"/>
    <property type="match status" value="1"/>
</dbReference>
<dbReference type="Pfam" id="PF08459">
    <property type="entry name" value="UvrC_RNaseH_dom"/>
    <property type="match status" value="1"/>
</dbReference>
<dbReference type="SMART" id="SM00465">
    <property type="entry name" value="GIYc"/>
    <property type="match status" value="1"/>
</dbReference>
<dbReference type="SUPFAM" id="SSF46600">
    <property type="entry name" value="C-terminal UvrC-binding domain of UvrB"/>
    <property type="match status" value="1"/>
</dbReference>
<dbReference type="SUPFAM" id="SSF82771">
    <property type="entry name" value="GIY-YIG endonuclease"/>
    <property type="match status" value="1"/>
</dbReference>
<dbReference type="SUPFAM" id="SSF47781">
    <property type="entry name" value="RuvA domain 2-like"/>
    <property type="match status" value="1"/>
</dbReference>
<dbReference type="PROSITE" id="PS50164">
    <property type="entry name" value="GIY_YIG"/>
    <property type="match status" value="1"/>
</dbReference>
<dbReference type="PROSITE" id="PS50151">
    <property type="entry name" value="UVR"/>
    <property type="match status" value="1"/>
</dbReference>
<dbReference type="PROSITE" id="PS50165">
    <property type="entry name" value="UVRC"/>
    <property type="match status" value="1"/>
</dbReference>
<proteinExistence type="inferred from homology"/>
<evidence type="ECO:0000255" key="1">
    <source>
        <dbReference type="HAMAP-Rule" id="MF_00203"/>
    </source>
</evidence>
<feature type="chain" id="PRO_0000227409" description="UvrABC system protein C">
    <location>
        <begin position="1"/>
        <end position="600"/>
    </location>
</feature>
<feature type="domain" description="GIY-YIG" evidence="1">
    <location>
        <begin position="15"/>
        <end position="100"/>
    </location>
</feature>
<feature type="domain" description="UVR" evidence="1">
    <location>
        <begin position="203"/>
        <end position="238"/>
    </location>
</feature>
<protein>
    <recommendedName>
        <fullName evidence="1">UvrABC system protein C</fullName>
        <shortName evidence="1">Protein UvrC</shortName>
    </recommendedName>
    <alternativeName>
        <fullName evidence="1">Excinuclease ABC subunit C</fullName>
    </alternativeName>
</protein>
<organism>
    <name type="scientific">Campylobacter jejuni (strain RM1221)</name>
    <dbReference type="NCBI Taxonomy" id="195099"/>
    <lineage>
        <taxon>Bacteria</taxon>
        <taxon>Pseudomonadati</taxon>
        <taxon>Campylobacterota</taxon>
        <taxon>Epsilonproteobacteria</taxon>
        <taxon>Campylobacterales</taxon>
        <taxon>Campylobacteraceae</taxon>
        <taxon>Campylobacter</taxon>
    </lineage>
</organism>
<sequence>MIKENLENELKTLPNSAGVYQYFNQEGKLLYVGKAKNLKNRVKSYFAFTPNLHANPRNSLRIQKMIEETVHLEFIATNSEADALILENSFIKQLHPKYNILLRDDKTYPYIYVDFEEEFPRFEITRKLVKKSKIKYFGPFFKGARELLDALYLYYPLKQKASCKSPCIFYQISRCLAPCDKLISREKYLEILDEAIHALLNPSVLLKNLEKQMLVLAQNENYEEAAKVRDQIAMIKDLEVKVEIDIAKLEDFEVFALAFKNSVLSTLRFVVQNGKIISANSKITPIRNDIQWDQNEIYKQLILENFSMDIPLLANVIYVYEEFEDRVLLEEILSQRFDKKISIKIPKIGEKRRICDLAFQNALLNIEKEQKNHDFTIQKELKFYFELENLPNDIEIFDNSHLQGVANVGAMVTYRINSWDKSKYRKFHLKHKNDYDQMREVLTRRALDFDKIPPPDLWLIDGGKALLDLAKEIIVSSGANVDILAISKEKIDAKAHRAKGGAKDKIHSLKGEFSLSINDKKLQFLQKLRDEAHRFAISFHQNTKKKQDLKSSKLANLGLSSGVIQKLLAYYGNFESIYKADFKDLTMLVGRKAAQKIKEN</sequence>
<gene>
    <name evidence="1" type="primary">uvrC</name>
    <name type="ordered locus">CJE1382</name>
</gene>
<name>UVRC_CAMJR</name>
<keyword id="KW-0963">Cytoplasm</keyword>
<keyword id="KW-0227">DNA damage</keyword>
<keyword id="KW-0228">DNA excision</keyword>
<keyword id="KW-0234">DNA repair</keyword>
<keyword id="KW-0267">Excision nuclease</keyword>
<keyword id="KW-0742">SOS response</keyword>
<accession>Q5HTL6</accession>